<reference key="1">
    <citation type="journal article" date="2007" name="Genome Biol.">
        <title>Characterization and modeling of the Haemophilus influenzae core and supragenomes based on the complete genomic sequences of Rd and 12 clinical nontypeable strains.</title>
        <authorList>
            <person name="Hogg J.S."/>
            <person name="Hu F.Z."/>
            <person name="Janto B."/>
            <person name="Boissy R."/>
            <person name="Hayes J."/>
            <person name="Keefe R."/>
            <person name="Post J.C."/>
            <person name="Ehrlich G.D."/>
        </authorList>
    </citation>
    <scope>NUCLEOTIDE SEQUENCE [LARGE SCALE GENOMIC DNA]</scope>
    <source>
        <strain>PittEE</strain>
    </source>
</reference>
<protein>
    <recommendedName>
        <fullName evidence="1">Phosphoenolpyruvate carboxykinase (ATP)</fullName>
        <shortName evidence="1">PCK</shortName>
        <shortName evidence="1">PEP carboxykinase</shortName>
        <shortName evidence="1">PEPCK</shortName>
        <ecNumber evidence="1">4.1.1.49</ecNumber>
    </recommendedName>
</protein>
<evidence type="ECO:0000255" key="1">
    <source>
        <dbReference type="HAMAP-Rule" id="MF_00453"/>
    </source>
</evidence>
<accession>A5UDR5</accession>
<feature type="chain" id="PRO_1000026327" description="Phosphoenolpyruvate carboxykinase (ATP)">
    <location>
        <begin position="1"/>
        <end position="538"/>
    </location>
</feature>
<feature type="binding site" evidence="1">
    <location>
        <position position="64"/>
    </location>
    <ligand>
        <name>substrate</name>
    </ligand>
</feature>
<feature type="binding site" evidence="1">
    <location>
        <position position="205"/>
    </location>
    <ligand>
        <name>substrate</name>
    </ligand>
</feature>
<feature type="binding site" evidence="1">
    <location>
        <position position="211"/>
    </location>
    <ligand>
        <name>ATP</name>
        <dbReference type="ChEBI" id="CHEBI:30616"/>
    </ligand>
</feature>
<feature type="binding site" evidence="1">
    <location>
        <position position="211"/>
    </location>
    <ligand>
        <name>Mn(2+)</name>
        <dbReference type="ChEBI" id="CHEBI:29035"/>
    </ligand>
</feature>
<feature type="binding site" evidence="1">
    <location>
        <position position="211"/>
    </location>
    <ligand>
        <name>substrate</name>
    </ligand>
</feature>
<feature type="binding site" evidence="1">
    <location>
        <position position="230"/>
    </location>
    <ligand>
        <name>ATP</name>
        <dbReference type="ChEBI" id="CHEBI:30616"/>
    </ligand>
</feature>
<feature type="binding site" evidence="1">
    <location>
        <position position="230"/>
    </location>
    <ligand>
        <name>Mn(2+)</name>
        <dbReference type="ChEBI" id="CHEBI:29035"/>
    </ligand>
</feature>
<feature type="binding site" evidence="1">
    <location>
        <begin position="246"/>
        <end position="254"/>
    </location>
    <ligand>
        <name>ATP</name>
        <dbReference type="ChEBI" id="CHEBI:30616"/>
    </ligand>
</feature>
<feature type="binding site" evidence="1">
    <location>
        <position position="267"/>
    </location>
    <ligand>
        <name>Mn(2+)</name>
        <dbReference type="ChEBI" id="CHEBI:29035"/>
    </ligand>
</feature>
<feature type="binding site" evidence="1">
    <location>
        <position position="295"/>
    </location>
    <ligand>
        <name>ATP</name>
        <dbReference type="ChEBI" id="CHEBI:30616"/>
    </ligand>
</feature>
<feature type="binding site" evidence="1">
    <location>
        <position position="331"/>
    </location>
    <ligand>
        <name>ATP</name>
        <dbReference type="ChEBI" id="CHEBI:30616"/>
    </ligand>
</feature>
<feature type="binding site" evidence="1">
    <location>
        <position position="331"/>
    </location>
    <ligand>
        <name>substrate</name>
    </ligand>
</feature>
<feature type="binding site" evidence="1">
    <location>
        <begin position="447"/>
        <end position="448"/>
    </location>
    <ligand>
        <name>ATP</name>
        <dbReference type="ChEBI" id="CHEBI:30616"/>
    </ligand>
</feature>
<feature type="binding site" evidence="1">
    <location>
        <position position="453"/>
    </location>
    <ligand>
        <name>ATP</name>
        <dbReference type="ChEBI" id="CHEBI:30616"/>
    </ligand>
</feature>
<sequence>MTDLNKVVKELEALGIYDVKEVVYNPSYEQLFEEETKPGLEGFEKGTLTTTGAVAVDTGIFTGRSPKDKYIVLDEKTKDTVWWTSETAKNDNKPMNQATWQSLKDLVTNQLSRKRLFVVDGFCGASEHDRIAVRIVTEVAWQAHFVKNMFIRPTEEQLKNFEPDFVVMNGSKVTNPNWKEQGLNSENFVAFNLTERIQLIGGTWYGGEMKKGMFSIMNYFLPLKGVGAMHCSANVGKDGDVAIFFGLSGTGKTTLSTDPKRELIGDDEHGWDDVGIFNFEGGCYAKTIHLSEENEPDIYRAIRRDALLENVVVRADGSVDFDDGSKTENTRVSYPIYHIDNIVKPVSRAGHATKVIFLTADAFGVLPPVSKLTPEQTKYYFLSGFTAKLAGTERGITEPTPTFSACFGAAFLTLHPTQYAEVLVKRMQAAGAEAYLVNTGWNGTGKRISIKDTRGIIDAILDGSIEKAEMGELPIFNLAIPKALLGVDSAILDPRDTYADKAQWQSKAEDLAGRFVKNFVKYATNEEGKALIAAGPKA</sequence>
<keyword id="KW-0067">ATP-binding</keyword>
<keyword id="KW-0963">Cytoplasm</keyword>
<keyword id="KW-0210">Decarboxylase</keyword>
<keyword id="KW-0312">Gluconeogenesis</keyword>
<keyword id="KW-0456">Lyase</keyword>
<keyword id="KW-0464">Manganese</keyword>
<keyword id="KW-0479">Metal-binding</keyword>
<keyword id="KW-0547">Nucleotide-binding</keyword>
<comment type="function">
    <text evidence="1">Involved in the gluconeogenesis. Catalyzes the conversion of oxaloacetate (OAA) to phosphoenolpyruvate (PEP) through direct phosphoryl transfer between the nucleoside triphosphate and OAA.</text>
</comment>
<comment type="catalytic activity">
    <reaction evidence="1">
        <text>oxaloacetate + ATP = phosphoenolpyruvate + ADP + CO2</text>
        <dbReference type="Rhea" id="RHEA:18617"/>
        <dbReference type="ChEBI" id="CHEBI:16452"/>
        <dbReference type="ChEBI" id="CHEBI:16526"/>
        <dbReference type="ChEBI" id="CHEBI:30616"/>
        <dbReference type="ChEBI" id="CHEBI:58702"/>
        <dbReference type="ChEBI" id="CHEBI:456216"/>
        <dbReference type="EC" id="4.1.1.49"/>
    </reaction>
</comment>
<comment type="cofactor">
    <cofactor evidence="1">
        <name>Mn(2+)</name>
        <dbReference type="ChEBI" id="CHEBI:29035"/>
    </cofactor>
    <text evidence="1">Binds 1 Mn(2+) ion per subunit.</text>
</comment>
<comment type="pathway">
    <text evidence="1">Carbohydrate biosynthesis; gluconeogenesis.</text>
</comment>
<comment type="subunit">
    <text evidence="1">Monomer.</text>
</comment>
<comment type="subcellular location">
    <subcellularLocation>
        <location evidence="1">Cytoplasm</location>
    </subcellularLocation>
</comment>
<comment type="similarity">
    <text evidence="1">Belongs to the phosphoenolpyruvate carboxykinase (ATP) family.</text>
</comment>
<gene>
    <name evidence="1" type="primary">pckA</name>
    <name type="ordered locus">CGSHiEE_08015</name>
</gene>
<organism>
    <name type="scientific">Haemophilus influenzae (strain PittEE)</name>
    <dbReference type="NCBI Taxonomy" id="374930"/>
    <lineage>
        <taxon>Bacteria</taxon>
        <taxon>Pseudomonadati</taxon>
        <taxon>Pseudomonadota</taxon>
        <taxon>Gammaproteobacteria</taxon>
        <taxon>Pasteurellales</taxon>
        <taxon>Pasteurellaceae</taxon>
        <taxon>Haemophilus</taxon>
    </lineage>
</organism>
<proteinExistence type="inferred from homology"/>
<dbReference type="EC" id="4.1.1.49" evidence="1"/>
<dbReference type="EMBL" id="CP000671">
    <property type="protein sequence ID" value="ABQ98916.1"/>
    <property type="molecule type" value="Genomic_DNA"/>
</dbReference>
<dbReference type="SMR" id="A5UDR5"/>
<dbReference type="KEGG" id="hip:CGSHiEE_08015"/>
<dbReference type="HOGENOM" id="CLU_018247_0_1_6"/>
<dbReference type="UniPathway" id="UPA00138"/>
<dbReference type="GO" id="GO:0005829">
    <property type="term" value="C:cytosol"/>
    <property type="evidence" value="ECO:0007669"/>
    <property type="project" value="TreeGrafter"/>
</dbReference>
<dbReference type="GO" id="GO:0005524">
    <property type="term" value="F:ATP binding"/>
    <property type="evidence" value="ECO:0007669"/>
    <property type="project" value="UniProtKB-UniRule"/>
</dbReference>
<dbReference type="GO" id="GO:0046872">
    <property type="term" value="F:metal ion binding"/>
    <property type="evidence" value="ECO:0007669"/>
    <property type="project" value="UniProtKB-KW"/>
</dbReference>
<dbReference type="GO" id="GO:0004612">
    <property type="term" value="F:phosphoenolpyruvate carboxykinase (ATP) activity"/>
    <property type="evidence" value="ECO:0007669"/>
    <property type="project" value="UniProtKB-UniRule"/>
</dbReference>
<dbReference type="GO" id="GO:0006094">
    <property type="term" value="P:gluconeogenesis"/>
    <property type="evidence" value="ECO:0007669"/>
    <property type="project" value="UniProtKB-UniRule"/>
</dbReference>
<dbReference type="CDD" id="cd00484">
    <property type="entry name" value="PEPCK_ATP"/>
    <property type="match status" value="1"/>
</dbReference>
<dbReference type="FunFam" id="2.170.8.10:FF:000001">
    <property type="entry name" value="Phosphoenolpyruvate carboxykinase (ATP)"/>
    <property type="match status" value="1"/>
</dbReference>
<dbReference type="FunFam" id="3.40.449.10:FF:000001">
    <property type="entry name" value="Phosphoenolpyruvate carboxykinase (ATP)"/>
    <property type="match status" value="1"/>
</dbReference>
<dbReference type="Gene3D" id="3.90.228.20">
    <property type="match status" value="1"/>
</dbReference>
<dbReference type="Gene3D" id="3.40.449.10">
    <property type="entry name" value="Phosphoenolpyruvate Carboxykinase, domain 1"/>
    <property type="match status" value="1"/>
</dbReference>
<dbReference type="Gene3D" id="2.170.8.10">
    <property type="entry name" value="Phosphoenolpyruvate Carboxykinase, domain 2"/>
    <property type="match status" value="1"/>
</dbReference>
<dbReference type="HAMAP" id="MF_00453">
    <property type="entry name" value="PEPCK_ATP"/>
    <property type="match status" value="1"/>
</dbReference>
<dbReference type="InterPro" id="IPR001272">
    <property type="entry name" value="PEP_carboxykinase_ATP"/>
</dbReference>
<dbReference type="InterPro" id="IPR013035">
    <property type="entry name" value="PEP_carboxykinase_C"/>
</dbReference>
<dbReference type="InterPro" id="IPR008210">
    <property type="entry name" value="PEP_carboxykinase_N"/>
</dbReference>
<dbReference type="InterPro" id="IPR015994">
    <property type="entry name" value="PEPCK_ATP_CS"/>
</dbReference>
<dbReference type="NCBIfam" id="TIGR00224">
    <property type="entry name" value="pckA"/>
    <property type="match status" value="1"/>
</dbReference>
<dbReference type="NCBIfam" id="NF006819">
    <property type="entry name" value="PRK09344.1-1"/>
    <property type="match status" value="1"/>
</dbReference>
<dbReference type="NCBIfam" id="NF006820">
    <property type="entry name" value="PRK09344.1-2"/>
    <property type="match status" value="1"/>
</dbReference>
<dbReference type="NCBIfam" id="NF006821">
    <property type="entry name" value="PRK09344.1-3"/>
    <property type="match status" value="1"/>
</dbReference>
<dbReference type="PANTHER" id="PTHR30031:SF0">
    <property type="entry name" value="PHOSPHOENOLPYRUVATE CARBOXYKINASE (ATP)"/>
    <property type="match status" value="1"/>
</dbReference>
<dbReference type="PANTHER" id="PTHR30031">
    <property type="entry name" value="PHOSPHOENOLPYRUVATE CARBOXYKINASE ATP"/>
    <property type="match status" value="1"/>
</dbReference>
<dbReference type="Pfam" id="PF01293">
    <property type="entry name" value="PEPCK_ATP"/>
    <property type="match status" value="1"/>
</dbReference>
<dbReference type="PIRSF" id="PIRSF006294">
    <property type="entry name" value="PEP_crbxkin"/>
    <property type="match status" value="1"/>
</dbReference>
<dbReference type="SUPFAM" id="SSF68923">
    <property type="entry name" value="PEP carboxykinase N-terminal domain"/>
    <property type="match status" value="1"/>
</dbReference>
<dbReference type="SUPFAM" id="SSF53795">
    <property type="entry name" value="PEP carboxykinase-like"/>
    <property type="match status" value="1"/>
</dbReference>
<dbReference type="PROSITE" id="PS00532">
    <property type="entry name" value="PEPCK_ATP"/>
    <property type="match status" value="1"/>
</dbReference>
<name>PCKA_HAEIE</name>